<sequence>MRHISIFGTSSDAGKSTLTFVIAKILQRAGIRVAPFKAQNVSNNARVCDDGSEIAIAQSFQAEVLAIPTSYHLNPILLKSGINGQASVIVEGQVISQQDVLEYYRDLDTLKPAVQRCFETLAKMYDCIVAEGAGSPVELNLMDKDLSNIFIAKHYQTKIILVADIEKGGVFASVWGTYNLLPADLRSNVIGVIINKFRGDLSLFDEGIRIIEQAFKIPVLGVLPYMPFNLGFEDNASLQNFVQQPRQKKLKIGVIAYPYMSNYNDFEPLIADDEVLLEFINSPISLEHFDGVILPGSKLVIEDLHWLKTNGLFEQLQQRRKPIFAICGGYEMLFEQLHDPERIENLEPTTATGLGLIDDEIYFAKNKILNKAEYPIFGLNIAGFEMHHGISQKYPLYFQKDNIQGTFIHQVFDHNAFRTQYLRAICAQYQGFDFQLYKTEQINNFIEACRKRLNVKLILEAIQDQ</sequence>
<protein>
    <recommendedName>
        <fullName>Cobyric acid synthase</fullName>
    </recommendedName>
</protein>
<name>COBQ_ACIAD</name>
<organism>
    <name type="scientific">Acinetobacter baylyi (strain ATCC 33305 / BD413 / ADP1)</name>
    <dbReference type="NCBI Taxonomy" id="62977"/>
    <lineage>
        <taxon>Bacteria</taxon>
        <taxon>Pseudomonadati</taxon>
        <taxon>Pseudomonadota</taxon>
        <taxon>Gammaproteobacteria</taxon>
        <taxon>Moraxellales</taxon>
        <taxon>Moraxellaceae</taxon>
        <taxon>Acinetobacter</taxon>
    </lineage>
</organism>
<reference key="1">
    <citation type="journal article" date="1997" name="Gene">
        <title>Nucleotide sequence of a putative periplasmic Mn superoxide dismutase from Acinetobacter calcoaceticus ADP1.</title>
        <authorList>
            <person name="Geissdoerfer W."/>
            <person name="Ratajczak A."/>
            <person name="Hillen W."/>
        </authorList>
    </citation>
    <scope>NUCLEOTIDE SEQUENCE [GENOMIC DNA]</scope>
</reference>
<reference key="2">
    <citation type="journal article" date="2004" name="Nucleic Acids Res.">
        <title>Unique features revealed by the genome sequence of Acinetobacter sp. ADP1, a versatile and naturally transformation competent bacterium.</title>
        <authorList>
            <person name="Barbe V."/>
            <person name="Vallenet D."/>
            <person name="Fonknechten N."/>
            <person name="Kreimeyer A."/>
            <person name="Oztas S."/>
            <person name="Labarre L."/>
            <person name="Cruveiller S."/>
            <person name="Robert C."/>
            <person name="Duprat S."/>
            <person name="Wincker P."/>
            <person name="Ornston L.N."/>
            <person name="Weissenbach J."/>
            <person name="Marliere P."/>
            <person name="Cohen G.N."/>
            <person name="Medigue C."/>
        </authorList>
    </citation>
    <scope>NUCLEOTIDE SEQUENCE [LARGE SCALE GENOMIC DNA]</scope>
    <source>
        <strain>ATCC 33305 / BD413 / ADP1</strain>
    </source>
</reference>
<keyword id="KW-0169">Cobalamin biosynthesis</keyword>
<keyword id="KW-0315">Glutamine amidotransferase</keyword>
<feature type="chain" id="PRO_0000141284" description="Cobyric acid synthase">
    <location>
        <begin position="1"/>
        <end position="465"/>
    </location>
</feature>
<feature type="domain" description="GATase cobBQ-type">
    <location>
        <begin position="249"/>
        <end position="417"/>
    </location>
</feature>
<feature type="active site" description="Nucleophile" evidence="1">
    <location>
        <position position="327"/>
    </location>
</feature>
<feature type="active site" evidence="1">
    <location>
        <position position="409"/>
    </location>
</feature>
<gene>
    <name type="primary">cobQ</name>
    <name type="ordered locus">ACIAD1071</name>
</gene>
<proteinExistence type="inferred from homology"/>
<evidence type="ECO:0000250" key="1"/>
<evidence type="ECO:0000305" key="2"/>
<accession>Q43989</accession>
<comment type="function">
    <text evidence="1">Catalyzes amidations at positions B, D, E, and G on adenosylcobyrinic A,C-diamide. NH(2) groups are provided by glutamine, and one molecule of ATP is hydrogenolyzed for each amidation (By similarity).</text>
</comment>
<comment type="pathway">
    <text>Cofactor biosynthesis; adenosylcobalamin biosynthesis.</text>
</comment>
<comment type="similarity">
    <text evidence="2">Belongs to the CobB/CobQ family. CobQ subfamily.</text>
</comment>
<dbReference type="EMBL" id="Z46863">
    <property type="protein sequence ID" value="CAA86930.1"/>
    <property type="molecule type" value="Genomic_DNA"/>
</dbReference>
<dbReference type="EMBL" id="CR543861">
    <property type="protein sequence ID" value="CAG67958.1"/>
    <property type="molecule type" value="Genomic_DNA"/>
</dbReference>
<dbReference type="RefSeq" id="WP_004921625.1">
    <property type="nucleotide sequence ID" value="NC_005966.1"/>
</dbReference>
<dbReference type="STRING" id="202950.GCA_001485005_01295"/>
<dbReference type="DNASU" id="2877936"/>
<dbReference type="GeneID" id="45233512"/>
<dbReference type="KEGG" id="aci:ACIAD1071"/>
<dbReference type="eggNOG" id="COG1492">
    <property type="taxonomic scope" value="Bacteria"/>
</dbReference>
<dbReference type="HOGENOM" id="CLU_019250_2_2_6"/>
<dbReference type="OrthoDB" id="9808302at2"/>
<dbReference type="BioCyc" id="ASP62977:ACIAD_RS04935-MONOMER"/>
<dbReference type="UniPathway" id="UPA00148"/>
<dbReference type="Proteomes" id="UP000000430">
    <property type="component" value="Chromosome"/>
</dbReference>
<dbReference type="GO" id="GO:0015420">
    <property type="term" value="F:ABC-type vitamin B12 transporter activity"/>
    <property type="evidence" value="ECO:0007669"/>
    <property type="project" value="UniProtKB-UniRule"/>
</dbReference>
<dbReference type="GO" id="GO:0003824">
    <property type="term" value="F:catalytic activity"/>
    <property type="evidence" value="ECO:0007669"/>
    <property type="project" value="InterPro"/>
</dbReference>
<dbReference type="GO" id="GO:0009236">
    <property type="term" value="P:cobalamin biosynthetic process"/>
    <property type="evidence" value="ECO:0007669"/>
    <property type="project" value="UniProtKB-UniRule"/>
</dbReference>
<dbReference type="CDD" id="cd05389">
    <property type="entry name" value="CobQ_N"/>
    <property type="match status" value="1"/>
</dbReference>
<dbReference type="CDD" id="cd01750">
    <property type="entry name" value="GATase1_CobQ"/>
    <property type="match status" value="1"/>
</dbReference>
<dbReference type="Gene3D" id="3.40.50.880">
    <property type="match status" value="1"/>
</dbReference>
<dbReference type="Gene3D" id="3.40.50.300">
    <property type="entry name" value="P-loop containing nucleotide triphosphate hydrolases"/>
    <property type="match status" value="1"/>
</dbReference>
<dbReference type="HAMAP" id="MF_00028">
    <property type="entry name" value="CobQ"/>
    <property type="match status" value="1"/>
</dbReference>
<dbReference type="InterPro" id="IPR029062">
    <property type="entry name" value="Class_I_gatase-like"/>
</dbReference>
<dbReference type="InterPro" id="IPR002586">
    <property type="entry name" value="CobQ/CobB/MinD/ParA_Nub-bd_dom"/>
</dbReference>
<dbReference type="InterPro" id="IPR033949">
    <property type="entry name" value="CobQ_GATase1"/>
</dbReference>
<dbReference type="InterPro" id="IPR047045">
    <property type="entry name" value="CobQ_N"/>
</dbReference>
<dbReference type="InterPro" id="IPR004459">
    <property type="entry name" value="CobQ_synth"/>
</dbReference>
<dbReference type="InterPro" id="IPR011698">
    <property type="entry name" value="GATase_3"/>
</dbReference>
<dbReference type="InterPro" id="IPR027417">
    <property type="entry name" value="P-loop_NTPase"/>
</dbReference>
<dbReference type="NCBIfam" id="TIGR00313">
    <property type="entry name" value="cobQ"/>
    <property type="match status" value="1"/>
</dbReference>
<dbReference type="NCBIfam" id="NF001989">
    <property type="entry name" value="PRK00784.1"/>
    <property type="match status" value="1"/>
</dbReference>
<dbReference type="PANTHER" id="PTHR21343:SF1">
    <property type="entry name" value="COBYRIC ACID SYNTHASE"/>
    <property type="match status" value="1"/>
</dbReference>
<dbReference type="PANTHER" id="PTHR21343">
    <property type="entry name" value="DETHIOBIOTIN SYNTHETASE"/>
    <property type="match status" value="1"/>
</dbReference>
<dbReference type="Pfam" id="PF01656">
    <property type="entry name" value="CbiA"/>
    <property type="match status" value="1"/>
</dbReference>
<dbReference type="Pfam" id="PF07685">
    <property type="entry name" value="GATase_3"/>
    <property type="match status" value="1"/>
</dbReference>
<dbReference type="SUPFAM" id="SSF52317">
    <property type="entry name" value="Class I glutamine amidotransferase-like"/>
    <property type="match status" value="1"/>
</dbReference>
<dbReference type="SUPFAM" id="SSF52540">
    <property type="entry name" value="P-loop containing nucleoside triphosphate hydrolases"/>
    <property type="match status" value="1"/>
</dbReference>
<dbReference type="PROSITE" id="PS51274">
    <property type="entry name" value="GATASE_COBBQ"/>
    <property type="match status" value="1"/>
</dbReference>